<evidence type="ECO:0000250" key="1"/>
<evidence type="ECO:0000255" key="2">
    <source>
        <dbReference type="HAMAP-Rule" id="MF_00403"/>
    </source>
</evidence>
<evidence type="ECO:0000256" key="3">
    <source>
        <dbReference type="SAM" id="MobiDB-lite"/>
    </source>
</evidence>
<evidence type="ECO:0000305" key="4"/>
<reference key="1">
    <citation type="journal article" date="2002" name="Nature">
        <title>Comparison of the genomes of two Xanthomonas pathogens with differing host specificities.</title>
        <authorList>
            <person name="da Silva A.C.R."/>
            <person name="Ferro J.A."/>
            <person name="Reinach F.C."/>
            <person name="Farah C.S."/>
            <person name="Furlan L.R."/>
            <person name="Quaggio R.B."/>
            <person name="Monteiro-Vitorello C.B."/>
            <person name="Van Sluys M.A."/>
            <person name="Almeida N.F. Jr."/>
            <person name="Alves L.M.C."/>
            <person name="do Amaral A.M."/>
            <person name="Bertolini M.C."/>
            <person name="Camargo L.E.A."/>
            <person name="Camarotte G."/>
            <person name="Cannavan F."/>
            <person name="Cardozo J."/>
            <person name="Chambergo F."/>
            <person name="Ciapina L.P."/>
            <person name="Cicarelli R.M.B."/>
            <person name="Coutinho L.L."/>
            <person name="Cursino-Santos J.R."/>
            <person name="El-Dorry H."/>
            <person name="Faria J.B."/>
            <person name="Ferreira A.J.S."/>
            <person name="Ferreira R.C.C."/>
            <person name="Ferro M.I.T."/>
            <person name="Formighieri E.F."/>
            <person name="Franco M.C."/>
            <person name="Greggio C.C."/>
            <person name="Gruber A."/>
            <person name="Katsuyama A.M."/>
            <person name="Kishi L.T."/>
            <person name="Leite R.P."/>
            <person name="Lemos E.G.M."/>
            <person name="Lemos M.V.F."/>
            <person name="Locali E.C."/>
            <person name="Machado M.A."/>
            <person name="Madeira A.M.B.N."/>
            <person name="Martinez-Rossi N.M."/>
            <person name="Martins E.C."/>
            <person name="Meidanis J."/>
            <person name="Menck C.F.M."/>
            <person name="Miyaki C.Y."/>
            <person name="Moon D.H."/>
            <person name="Moreira L.M."/>
            <person name="Novo M.T.M."/>
            <person name="Okura V.K."/>
            <person name="Oliveira M.C."/>
            <person name="Oliveira V.R."/>
            <person name="Pereira H.A."/>
            <person name="Rossi A."/>
            <person name="Sena J.A.D."/>
            <person name="Silva C."/>
            <person name="de Souza R.F."/>
            <person name="Spinola L.A.F."/>
            <person name="Takita M.A."/>
            <person name="Tamura R.E."/>
            <person name="Teixeira E.C."/>
            <person name="Tezza R.I.D."/>
            <person name="Trindade dos Santos M."/>
            <person name="Truffi D."/>
            <person name="Tsai S.M."/>
            <person name="White F.F."/>
            <person name="Setubal J.C."/>
            <person name="Kitajima J.P."/>
        </authorList>
    </citation>
    <scope>NUCLEOTIDE SEQUENCE [LARGE SCALE GENOMIC DNA]</scope>
    <source>
        <strain>306</strain>
    </source>
</reference>
<sequence>MTTINQLVRKPRQATTYKSASPALDKCPQRRGVCTRVYTTTPKKPNSALRKVAKVRLTNQEEVISYIGGEGHNLQEHSVVLIRGGRVKDLPGVRYHTVRGSLDAAGVAKRRQGRSKYGAKRPKS</sequence>
<name>RS12_XANAC</name>
<proteinExistence type="inferred from homology"/>
<protein>
    <recommendedName>
        <fullName evidence="2">Small ribosomal subunit protein uS12</fullName>
    </recommendedName>
    <alternativeName>
        <fullName evidence="4">30S ribosomal protein S12</fullName>
    </alternativeName>
</protein>
<organism>
    <name type="scientific">Xanthomonas axonopodis pv. citri (strain 306)</name>
    <dbReference type="NCBI Taxonomy" id="190486"/>
    <lineage>
        <taxon>Bacteria</taxon>
        <taxon>Pseudomonadati</taxon>
        <taxon>Pseudomonadota</taxon>
        <taxon>Gammaproteobacteria</taxon>
        <taxon>Lysobacterales</taxon>
        <taxon>Lysobacteraceae</taxon>
        <taxon>Xanthomonas</taxon>
    </lineage>
</organism>
<comment type="function">
    <text evidence="2">With S4 and S5 plays an important role in translational accuracy.</text>
</comment>
<comment type="function">
    <text evidence="2">Interacts with and stabilizes bases of the 16S rRNA that are involved in tRNA selection in the A site and with the mRNA backbone. Located at the interface of the 30S and 50S subunits, it traverses the body of the 30S subunit contacting proteins on the other side and probably holding the rRNA structure together. The combined cluster of proteins S8, S12 and S17 appears to hold together the shoulder and platform of the 30S subunit.</text>
</comment>
<comment type="subunit">
    <text evidence="2">Part of the 30S ribosomal subunit. Contacts proteins S8 and S17. May interact with IF1 in the 30S initiation complex.</text>
</comment>
<comment type="similarity">
    <text evidence="2">Belongs to the universal ribosomal protein uS12 family.</text>
</comment>
<dbReference type="EMBL" id="AE008923">
    <property type="protein sequence ID" value="AAM35850.1"/>
    <property type="molecule type" value="Genomic_DNA"/>
</dbReference>
<dbReference type="RefSeq" id="WP_002811712.1">
    <property type="nucleotide sequence ID" value="NC_003919.1"/>
</dbReference>
<dbReference type="SMR" id="Q8PNS8"/>
<dbReference type="GeneID" id="97509330"/>
<dbReference type="KEGG" id="xac:XAC0967"/>
<dbReference type="eggNOG" id="COG0048">
    <property type="taxonomic scope" value="Bacteria"/>
</dbReference>
<dbReference type="HOGENOM" id="CLU_104295_1_2_6"/>
<dbReference type="Proteomes" id="UP000000576">
    <property type="component" value="Chromosome"/>
</dbReference>
<dbReference type="GO" id="GO:0015935">
    <property type="term" value="C:small ribosomal subunit"/>
    <property type="evidence" value="ECO:0007669"/>
    <property type="project" value="InterPro"/>
</dbReference>
<dbReference type="GO" id="GO:0019843">
    <property type="term" value="F:rRNA binding"/>
    <property type="evidence" value="ECO:0007669"/>
    <property type="project" value="UniProtKB-UniRule"/>
</dbReference>
<dbReference type="GO" id="GO:0003735">
    <property type="term" value="F:structural constituent of ribosome"/>
    <property type="evidence" value="ECO:0007669"/>
    <property type="project" value="InterPro"/>
</dbReference>
<dbReference type="GO" id="GO:0000049">
    <property type="term" value="F:tRNA binding"/>
    <property type="evidence" value="ECO:0007669"/>
    <property type="project" value="UniProtKB-UniRule"/>
</dbReference>
<dbReference type="GO" id="GO:0006412">
    <property type="term" value="P:translation"/>
    <property type="evidence" value="ECO:0007669"/>
    <property type="project" value="UniProtKB-UniRule"/>
</dbReference>
<dbReference type="CDD" id="cd03368">
    <property type="entry name" value="Ribosomal_S12"/>
    <property type="match status" value="1"/>
</dbReference>
<dbReference type="FunFam" id="2.40.50.140:FF:000001">
    <property type="entry name" value="30S ribosomal protein S12"/>
    <property type="match status" value="1"/>
</dbReference>
<dbReference type="Gene3D" id="2.40.50.140">
    <property type="entry name" value="Nucleic acid-binding proteins"/>
    <property type="match status" value="1"/>
</dbReference>
<dbReference type="HAMAP" id="MF_00403_B">
    <property type="entry name" value="Ribosomal_uS12_B"/>
    <property type="match status" value="1"/>
</dbReference>
<dbReference type="InterPro" id="IPR012340">
    <property type="entry name" value="NA-bd_OB-fold"/>
</dbReference>
<dbReference type="InterPro" id="IPR006032">
    <property type="entry name" value="Ribosomal_uS12"/>
</dbReference>
<dbReference type="InterPro" id="IPR005679">
    <property type="entry name" value="Ribosomal_uS12_bac"/>
</dbReference>
<dbReference type="NCBIfam" id="TIGR00981">
    <property type="entry name" value="rpsL_bact"/>
    <property type="match status" value="1"/>
</dbReference>
<dbReference type="PANTHER" id="PTHR11652">
    <property type="entry name" value="30S RIBOSOMAL PROTEIN S12 FAMILY MEMBER"/>
    <property type="match status" value="1"/>
</dbReference>
<dbReference type="Pfam" id="PF00164">
    <property type="entry name" value="Ribosom_S12_S23"/>
    <property type="match status" value="1"/>
</dbReference>
<dbReference type="PIRSF" id="PIRSF002133">
    <property type="entry name" value="Ribosomal_S12/S23"/>
    <property type="match status" value="1"/>
</dbReference>
<dbReference type="PRINTS" id="PR01034">
    <property type="entry name" value="RIBOSOMALS12"/>
</dbReference>
<dbReference type="SUPFAM" id="SSF50249">
    <property type="entry name" value="Nucleic acid-binding proteins"/>
    <property type="match status" value="1"/>
</dbReference>
<dbReference type="PROSITE" id="PS00055">
    <property type="entry name" value="RIBOSOMAL_S12"/>
    <property type="match status" value="1"/>
</dbReference>
<keyword id="KW-0488">Methylation</keyword>
<keyword id="KW-0687">Ribonucleoprotein</keyword>
<keyword id="KW-0689">Ribosomal protein</keyword>
<keyword id="KW-0694">RNA-binding</keyword>
<keyword id="KW-0699">rRNA-binding</keyword>
<keyword id="KW-0820">tRNA-binding</keyword>
<accession>Q8PNS8</accession>
<feature type="chain" id="PRO_0000146357" description="Small ribosomal subunit protein uS12">
    <location>
        <begin position="1"/>
        <end position="124"/>
    </location>
</feature>
<feature type="region of interest" description="Disordered" evidence="3">
    <location>
        <begin position="1"/>
        <end position="24"/>
    </location>
</feature>
<feature type="modified residue" description="3-methylthioaspartic acid" evidence="1">
    <location>
        <position position="89"/>
    </location>
</feature>
<gene>
    <name evidence="2" type="primary">rpsL</name>
    <name type="ordered locus">XAC0967</name>
</gene>